<comment type="function">
    <text evidence="1">Serine protease inhibitor. The major targets of this inhibitor are plasmin and trypsin, but it also inactivates matriptase-3/TMPRSS7 and chymotrypsin (By similarity).</text>
</comment>
<comment type="subunit">
    <text evidence="1">Forms protease inhibiting heterodimer with TMPRSS7.</text>
</comment>
<comment type="subcellular location">
    <subcellularLocation>
        <location>Secreted</location>
    </subcellularLocation>
</comment>
<comment type="tissue specificity">
    <text>Expressed by the liver and secreted in plasma.</text>
</comment>
<comment type="PTM">
    <text evidence="2">Proteolytically cleaved at Pro-35 by both the prolyl endopeptidase FAP form and antiplasmin-cleaving enzyme FAP soluble form to generate mature alpha-2-antiplasmin.</text>
</comment>
<comment type="similarity">
    <text evidence="6">Belongs to the serpin family.</text>
</comment>
<sequence>MALLRGLLVLSLSCLQGPCFTFSPVSAVDLPGQQPVSEQAQQKLPLPALFKLDNQDFGDHATLKRSPGHCKSVPTAEETRRLAQAMMAFTTDLFSLVAQTSTSSNLVLSPLSVALALSHLALGAQNQTLHSLHRVLHMNTGSCLPHLLSHFYQNLGPGTIRLAARIYLQKGFPIKDDFLEQSERLFGAKPVKLTGKQEEDLANINQWVKEATEGKIEDFLSELPDSTVLLLLNAIHFHGFWRTKFDPSLTQKDFFHLDERFTVSVDMMHAVSYPLRWFLLEQPEIQVAHFPFKNNMSFVVVMPTYFEWNVSEVLANLTWDTLYHPSLQERPTKVWLPKLHLQQQLDLVATLSQLGLQELFQGPDLRGISEQNLVVSSVQHQSTMELSEAGVEAAAATSVAMNRMSLSSFTVNRPFLFFIMEDTIGVPLFVGSVRNPNPSALPQLQEQRDSPDNRLIGQNDKADFHGGKTFGPDLKLAPRMEEDYPQFSSPK</sequence>
<protein>
    <recommendedName>
        <fullName>Alpha-2-antiplasmin</fullName>
        <shortName>Alpha-2-AP</shortName>
    </recommendedName>
    <alternativeName>
        <fullName>Alpha-2-plasmin inhibitor</fullName>
        <shortName>Alpha-2-PI</shortName>
    </alternativeName>
    <alternativeName>
        <fullName>Serpin F2</fullName>
    </alternativeName>
</protein>
<name>A2AP_MOUSE</name>
<organism>
    <name type="scientific">Mus musculus</name>
    <name type="common">Mouse</name>
    <dbReference type="NCBI Taxonomy" id="10090"/>
    <lineage>
        <taxon>Eukaryota</taxon>
        <taxon>Metazoa</taxon>
        <taxon>Chordata</taxon>
        <taxon>Craniata</taxon>
        <taxon>Vertebrata</taxon>
        <taxon>Euteleostomi</taxon>
        <taxon>Mammalia</taxon>
        <taxon>Eutheria</taxon>
        <taxon>Euarchontoglires</taxon>
        <taxon>Glires</taxon>
        <taxon>Rodentia</taxon>
        <taxon>Myomorpha</taxon>
        <taxon>Muroidea</taxon>
        <taxon>Muridae</taxon>
        <taxon>Murinae</taxon>
        <taxon>Mus</taxon>
        <taxon>Mus</taxon>
    </lineage>
</organism>
<dbReference type="EMBL" id="Z36774">
    <property type="protein sequence ID" value="CAA85350.1"/>
    <property type="molecule type" value="mRNA"/>
</dbReference>
<dbReference type="EMBL" id="BC026756">
    <property type="protein sequence ID" value="AAH26756.1"/>
    <property type="molecule type" value="mRNA"/>
</dbReference>
<dbReference type="CCDS" id="CCDS25046.1"/>
<dbReference type="PIR" id="S47217">
    <property type="entry name" value="S47217"/>
</dbReference>
<dbReference type="RefSeq" id="NP_032904.1">
    <property type="nucleotide sequence ID" value="NM_008878.2"/>
</dbReference>
<dbReference type="PDB" id="2R9Y">
    <property type="method" value="X-ray"/>
    <property type="resolution" value="2.65 A"/>
    <property type="chains" value="A=71-491"/>
</dbReference>
<dbReference type="PDBsum" id="2R9Y"/>
<dbReference type="SMR" id="Q61247"/>
<dbReference type="BioGRID" id="202249">
    <property type="interactions" value="3"/>
</dbReference>
<dbReference type="FunCoup" id="Q61247">
    <property type="interactions" value="224"/>
</dbReference>
<dbReference type="STRING" id="10090.ENSMUSP00000048704"/>
<dbReference type="MEROPS" id="I04.023"/>
<dbReference type="GlyCosmos" id="Q61247">
    <property type="glycosylation" value="4 sites, No reported glycans"/>
</dbReference>
<dbReference type="GlyGen" id="Q61247">
    <property type="glycosylation" value="4 sites"/>
</dbReference>
<dbReference type="iPTMnet" id="Q61247"/>
<dbReference type="PhosphoSitePlus" id="Q61247"/>
<dbReference type="CPTAC" id="non-CPTAC-3405"/>
<dbReference type="CPTAC" id="non-CPTAC-5573"/>
<dbReference type="jPOST" id="Q61247"/>
<dbReference type="PaxDb" id="10090-ENSMUSP00000048704"/>
<dbReference type="PeptideAtlas" id="Q61247"/>
<dbReference type="ProteomicsDB" id="286005"/>
<dbReference type="Antibodypedia" id="852">
    <property type="antibodies" value="583 antibodies from 39 providers"/>
</dbReference>
<dbReference type="DNASU" id="18816"/>
<dbReference type="Ensembl" id="ENSMUST00000043696.9">
    <property type="protein sequence ID" value="ENSMUSP00000048704.3"/>
    <property type="gene ID" value="ENSMUSG00000038224.13"/>
</dbReference>
<dbReference type="Ensembl" id="ENSMUST00000108437.8">
    <property type="protein sequence ID" value="ENSMUSP00000104076.2"/>
    <property type="gene ID" value="ENSMUSG00000038224.13"/>
</dbReference>
<dbReference type="GeneID" id="18816"/>
<dbReference type="KEGG" id="mmu:18816"/>
<dbReference type="UCSC" id="uc007kdr.2">
    <property type="organism name" value="mouse"/>
</dbReference>
<dbReference type="AGR" id="MGI:107173"/>
<dbReference type="CTD" id="5345"/>
<dbReference type="MGI" id="MGI:107173">
    <property type="gene designation" value="Serpinf2"/>
</dbReference>
<dbReference type="VEuPathDB" id="HostDB:ENSMUSG00000038224"/>
<dbReference type="eggNOG" id="KOG2392">
    <property type="taxonomic scope" value="Eukaryota"/>
</dbReference>
<dbReference type="GeneTree" id="ENSGT00940000158386"/>
<dbReference type="HOGENOM" id="CLU_023330_3_2_1"/>
<dbReference type="InParanoid" id="Q61247"/>
<dbReference type="OMA" id="SCEMTWK"/>
<dbReference type="OrthoDB" id="9947020at2759"/>
<dbReference type="PhylomeDB" id="Q61247"/>
<dbReference type="TreeFam" id="TF317350"/>
<dbReference type="Reactome" id="R-MMU-114608">
    <property type="pathway name" value="Platelet degranulation"/>
</dbReference>
<dbReference type="Reactome" id="R-MMU-75205">
    <property type="pathway name" value="Dissolution of Fibrin Clot"/>
</dbReference>
<dbReference type="BioGRID-ORCS" id="18816">
    <property type="hits" value="2 hits in 76 CRISPR screens"/>
</dbReference>
<dbReference type="ChiTaRS" id="Serpinf2">
    <property type="organism name" value="mouse"/>
</dbReference>
<dbReference type="EvolutionaryTrace" id="Q61247"/>
<dbReference type="PRO" id="PR:Q61247"/>
<dbReference type="Proteomes" id="UP000000589">
    <property type="component" value="Chromosome 11"/>
</dbReference>
<dbReference type="RNAct" id="Q61247">
    <property type="molecule type" value="protein"/>
</dbReference>
<dbReference type="Bgee" id="ENSMUSG00000038224">
    <property type="expression patterns" value="Expressed in yolk sac and 66 other cell types or tissues"/>
</dbReference>
<dbReference type="ExpressionAtlas" id="Q61247">
    <property type="expression patterns" value="baseline and differential"/>
</dbReference>
<dbReference type="GO" id="GO:0009986">
    <property type="term" value="C:cell surface"/>
    <property type="evidence" value="ECO:0007669"/>
    <property type="project" value="Ensembl"/>
</dbReference>
<dbReference type="GO" id="GO:0062023">
    <property type="term" value="C:collagen-containing extracellular matrix"/>
    <property type="evidence" value="ECO:0007005"/>
    <property type="project" value="BHF-UCL"/>
</dbReference>
<dbReference type="GO" id="GO:0005577">
    <property type="term" value="C:fibrinogen complex"/>
    <property type="evidence" value="ECO:0007669"/>
    <property type="project" value="Ensembl"/>
</dbReference>
<dbReference type="GO" id="GO:0002020">
    <property type="term" value="F:protease binding"/>
    <property type="evidence" value="ECO:0007669"/>
    <property type="project" value="Ensembl"/>
</dbReference>
<dbReference type="GO" id="GO:0042803">
    <property type="term" value="F:protein homodimerization activity"/>
    <property type="evidence" value="ECO:0007669"/>
    <property type="project" value="Ensembl"/>
</dbReference>
<dbReference type="GO" id="GO:0004867">
    <property type="term" value="F:serine-type endopeptidase inhibitor activity"/>
    <property type="evidence" value="ECO:0007669"/>
    <property type="project" value="UniProtKB-KW"/>
</dbReference>
<dbReference type="GO" id="GO:0006953">
    <property type="term" value="P:acute-phase response"/>
    <property type="evidence" value="ECO:0007669"/>
    <property type="project" value="UniProtKB-KW"/>
</dbReference>
<dbReference type="GO" id="GO:0048514">
    <property type="term" value="P:blood vessel morphogenesis"/>
    <property type="evidence" value="ECO:0000315"/>
    <property type="project" value="BHF-UCL"/>
</dbReference>
<dbReference type="GO" id="GO:0030199">
    <property type="term" value="P:collagen fibril organization"/>
    <property type="evidence" value="ECO:0000315"/>
    <property type="project" value="BHF-UCL"/>
</dbReference>
<dbReference type="GO" id="GO:0002034">
    <property type="term" value="P:maintenance of blood vessel diameter homeostasis by renin-angiotensin"/>
    <property type="evidence" value="ECO:0000315"/>
    <property type="project" value="BHF-UCL"/>
</dbReference>
<dbReference type="GO" id="GO:0051918">
    <property type="term" value="P:negative regulation of fibrinolysis"/>
    <property type="evidence" value="ECO:0007669"/>
    <property type="project" value="Ensembl"/>
</dbReference>
<dbReference type="GO" id="GO:0010757">
    <property type="term" value="P:negative regulation of plasminogen activation"/>
    <property type="evidence" value="ECO:0007669"/>
    <property type="project" value="Ensembl"/>
</dbReference>
<dbReference type="GO" id="GO:0045597">
    <property type="term" value="P:positive regulation of cell differentiation"/>
    <property type="evidence" value="ECO:0000315"/>
    <property type="project" value="BHF-UCL"/>
</dbReference>
<dbReference type="GO" id="GO:0032967">
    <property type="term" value="P:positive regulation of collagen biosynthetic process"/>
    <property type="evidence" value="ECO:0000315"/>
    <property type="project" value="BHF-UCL"/>
</dbReference>
<dbReference type="GO" id="GO:0070374">
    <property type="term" value="P:positive regulation of ERK1 and ERK2 cascade"/>
    <property type="evidence" value="ECO:0007669"/>
    <property type="project" value="Ensembl"/>
</dbReference>
<dbReference type="GO" id="GO:0046330">
    <property type="term" value="P:positive regulation of JNK cascade"/>
    <property type="evidence" value="ECO:0007669"/>
    <property type="project" value="Ensembl"/>
</dbReference>
<dbReference type="GO" id="GO:0048661">
    <property type="term" value="P:positive regulation of smooth muscle cell proliferation"/>
    <property type="evidence" value="ECO:0000315"/>
    <property type="project" value="BHF-UCL"/>
</dbReference>
<dbReference type="GO" id="GO:0051496">
    <property type="term" value="P:positive regulation of stress fiber assembly"/>
    <property type="evidence" value="ECO:0007669"/>
    <property type="project" value="Ensembl"/>
</dbReference>
<dbReference type="GO" id="GO:0045944">
    <property type="term" value="P:positive regulation of transcription by RNA polymerase II"/>
    <property type="evidence" value="ECO:0000315"/>
    <property type="project" value="BHF-UCL"/>
</dbReference>
<dbReference type="GO" id="GO:0071636">
    <property type="term" value="P:positive regulation of transforming growth factor beta production"/>
    <property type="evidence" value="ECO:0000315"/>
    <property type="project" value="BHF-UCL"/>
</dbReference>
<dbReference type="CDD" id="cd02053">
    <property type="entry name" value="serpinF2_A2AP"/>
    <property type="match status" value="1"/>
</dbReference>
<dbReference type="FunFam" id="3.30.497.10:FF:000003">
    <property type="entry name" value="Serpin family F member 1"/>
    <property type="match status" value="1"/>
</dbReference>
<dbReference type="Gene3D" id="2.30.39.10">
    <property type="entry name" value="Alpha-1-antitrypsin, domain 1"/>
    <property type="match status" value="1"/>
</dbReference>
<dbReference type="Gene3D" id="3.30.497.10">
    <property type="entry name" value="Antithrombin, subunit I, domain 2"/>
    <property type="match status" value="1"/>
</dbReference>
<dbReference type="InterPro" id="IPR033833">
    <property type="entry name" value="Alpha2AP_serpin_dom"/>
</dbReference>
<dbReference type="InterPro" id="IPR023795">
    <property type="entry name" value="Serpin_CS"/>
</dbReference>
<dbReference type="InterPro" id="IPR023796">
    <property type="entry name" value="Serpin_dom"/>
</dbReference>
<dbReference type="InterPro" id="IPR000215">
    <property type="entry name" value="Serpin_fam"/>
</dbReference>
<dbReference type="InterPro" id="IPR036186">
    <property type="entry name" value="Serpin_sf"/>
</dbReference>
<dbReference type="InterPro" id="IPR042178">
    <property type="entry name" value="Serpin_sf_1"/>
</dbReference>
<dbReference type="InterPro" id="IPR042185">
    <property type="entry name" value="Serpin_sf_2"/>
</dbReference>
<dbReference type="PANTHER" id="PTHR11461:SF20">
    <property type="entry name" value="ALPHA-2-ANTIPLASMIN"/>
    <property type="match status" value="1"/>
</dbReference>
<dbReference type="PANTHER" id="PTHR11461">
    <property type="entry name" value="SERINE PROTEASE INHIBITOR, SERPIN"/>
    <property type="match status" value="1"/>
</dbReference>
<dbReference type="Pfam" id="PF00079">
    <property type="entry name" value="Serpin"/>
    <property type="match status" value="1"/>
</dbReference>
<dbReference type="SMART" id="SM00093">
    <property type="entry name" value="SERPIN"/>
    <property type="match status" value="1"/>
</dbReference>
<dbReference type="SUPFAM" id="SSF56574">
    <property type="entry name" value="Serpins"/>
    <property type="match status" value="1"/>
</dbReference>
<dbReference type="PROSITE" id="PS00284">
    <property type="entry name" value="SERPIN"/>
    <property type="match status" value="1"/>
</dbReference>
<gene>
    <name type="primary">Serpinf2</name>
    <name type="synonym">Pli</name>
</gene>
<reference key="1">
    <citation type="journal article" date="1996" name="J. Clin. Invest.">
        <title>The kidney is a major site of alpha(2)-antiplasmin production.</title>
        <authorList>
            <person name="Menoud P.-A."/>
            <person name="Sappino N."/>
            <person name="Boudal-Khoshbeen M."/>
            <person name="Vassalli J.-D."/>
            <person name="Sappino A.P."/>
        </authorList>
    </citation>
    <scope>NUCLEOTIDE SEQUENCE [MRNA]</scope>
    <source>
        <strain>C57BL/6 X CBA</strain>
        <tissue>Liver</tissue>
    </source>
</reference>
<reference key="2">
    <citation type="journal article" date="2004" name="Genome Res.">
        <title>The status, quality, and expansion of the NIH full-length cDNA project: the Mammalian Gene Collection (MGC).</title>
        <authorList>
            <consortium name="The MGC Project Team"/>
        </authorList>
    </citation>
    <scope>NUCLEOTIDE SEQUENCE [LARGE SCALE MRNA]</scope>
    <source>
        <strain>FVB/N</strain>
        <tissue>Liver</tissue>
    </source>
</reference>
<reference key="3">
    <citation type="journal article" date="1994" name="Eur. J. Biochem.">
        <title>Characterization of the murine plasma fibrinolytic system.</title>
        <authorList>
            <person name="Lijnen H.R."/>
            <person name="van Hoef B."/>
            <person name="Beelen V."/>
            <person name="Collen D."/>
        </authorList>
    </citation>
    <scope>PROTEIN SEQUENCE OF 28-33</scope>
</reference>
<reference key="4">
    <citation type="journal article" date="2010" name="Cell">
        <title>A tissue-specific atlas of mouse protein phosphorylation and expression.</title>
        <authorList>
            <person name="Huttlin E.L."/>
            <person name="Jedrychowski M.P."/>
            <person name="Elias J.E."/>
            <person name="Goswami T."/>
            <person name="Rad R."/>
            <person name="Beausoleil S.A."/>
            <person name="Villen J."/>
            <person name="Haas W."/>
            <person name="Sowa M.E."/>
            <person name="Gygi S.P."/>
        </authorList>
    </citation>
    <scope>IDENTIFICATION BY MASS SPECTROMETRY [LARGE SCALE ANALYSIS]</scope>
    <source>
        <tissue>Brown adipose tissue</tissue>
        <tissue>Heart</tissue>
        <tissue>Kidney</tissue>
        <tissue>Liver</tissue>
        <tissue>Lung</tissue>
        <tissue>Pancreas</tissue>
        <tissue>Spleen</tissue>
        <tissue>Testis</tissue>
    </source>
</reference>
<keyword id="KW-0002">3D-structure</keyword>
<keyword id="KW-0011">Acute phase</keyword>
<keyword id="KW-0903">Direct protein sequencing</keyword>
<keyword id="KW-1015">Disulfide bond</keyword>
<keyword id="KW-0325">Glycoprotein</keyword>
<keyword id="KW-0646">Protease inhibitor</keyword>
<keyword id="KW-1185">Reference proteome</keyword>
<keyword id="KW-0964">Secreted</keyword>
<keyword id="KW-0722">Serine protease inhibitor</keyword>
<keyword id="KW-0732">Signal</keyword>
<keyword id="KW-0765">Sulfation</keyword>
<accession>Q61247</accession>
<feature type="signal peptide" evidence="5">
    <location>
        <begin position="1"/>
        <end position="27"/>
    </location>
</feature>
<feature type="propeptide" id="PRO_0000430668" evidence="5">
    <location>
        <begin position="28"/>
        <end position="39"/>
    </location>
</feature>
<feature type="chain" id="PRO_0000032513" description="Alpha-2-antiplasmin">
    <location>
        <begin position="40"/>
        <end position="491"/>
    </location>
</feature>
<feature type="region of interest" description="Disordered" evidence="4">
    <location>
        <begin position="439"/>
        <end position="491"/>
    </location>
</feature>
<feature type="site" description="Cleavage; by prolyl endopeptidase FAP, antiplasmin-cleaving enzyme FAP soluble form" evidence="2">
    <location>
        <begin position="39"/>
        <end position="40"/>
    </location>
</feature>
<feature type="site" description="Reactive bond for plasmin">
    <location>
        <begin position="403"/>
        <end position="404"/>
    </location>
</feature>
<feature type="site" description="Reactive bond for chymotrypsin" evidence="1">
    <location>
        <begin position="404"/>
        <end position="405"/>
    </location>
</feature>
<feature type="modified residue" description="Sulfotyrosine" evidence="1">
    <location>
        <position position="484"/>
    </location>
</feature>
<feature type="glycosylation site" description="N-linked (GlcNAc...) asparagine" evidence="3">
    <location>
        <position position="126"/>
    </location>
</feature>
<feature type="glycosylation site" description="N-linked (GlcNAc...) asparagine" evidence="3">
    <location>
        <position position="295"/>
    </location>
</feature>
<feature type="glycosylation site" description="N-linked (GlcNAc...) asparagine" evidence="3">
    <location>
        <position position="309"/>
    </location>
</feature>
<feature type="glycosylation site" description="N-linked (GlcNAc...) asparagine" evidence="3">
    <location>
        <position position="316"/>
    </location>
</feature>
<feature type="disulfide bond" evidence="1">
    <location>
        <begin position="70"/>
        <end position="143"/>
    </location>
</feature>
<feature type="helix" evidence="7">
    <location>
        <begin position="76"/>
        <end position="100"/>
    </location>
</feature>
<feature type="strand" evidence="7">
    <location>
        <begin position="103"/>
        <end position="108"/>
    </location>
</feature>
<feature type="helix" evidence="7">
    <location>
        <begin position="110"/>
        <end position="123"/>
    </location>
</feature>
<feature type="helix" evidence="7">
    <location>
        <begin position="126"/>
        <end position="135"/>
    </location>
</feature>
<feature type="helix" evidence="7">
    <location>
        <begin position="144"/>
        <end position="153"/>
    </location>
</feature>
<feature type="strand" evidence="7">
    <location>
        <begin position="157"/>
        <end position="168"/>
    </location>
</feature>
<feature type="helix" evidence="7">
    <location>
        <begin position="176"/>
        <end position="186"/>
    </location>
</feature>
<feature type="helix" evidence="7">
    <location>
        <begin position="197"/>
        <end position="211"/>
    </location>
</feature>
<feature type="turn" evidence="7">
    <location>
        <begin position="212"/>
        <end position="214"/>
    </location>
</feature>
<feature type="strand" evidence="7">
    <location>
        <begin position="228"/>
        <end position="238"/>
    </location>
</feature>
<feature type="strand" evidence="7">
    <location>
        <begin position="241"/>
        <end position="243"/>
    </location>
</feature>
<feature type="helix" evidence="7">
    <location>
        <begin position="247"/>
        <end position="249"/>
    </location>
</feature>
<feature type="strand" evidence="7">
    <location>
        <begin position="251"/>
        <end position="280"/>
    </location>
</feature>
<feature type="turn" evidence="7">
    <location>
        <begin position="281"/>
        <end position="284"/>
    </location>
</feature>
<feature type="strand" evidence="7">
    <location>
        <begin position="285"/>
        <end position="306"/>
    </location>
</feature>
<feature type="helix" evidence="7">
    <location>
        <begin position="310"/>
        <end position="314"/>
    </location>
</feature>
<feature type="helix" evidence="7">
    <location>
        <begin position="319"/>
        <end position="322"/>
    </location>
</feature>
<feature type="strand" evidence="7">
    <location>
        <begin position="330"/>
        <end position="337"/>
    </location>
</feature>
<feature type="strand" evidence="7">
    <location>
        <begin position="339"/>
        <end position="346"/>
    </location>
</feature>
<feature type="helix" evidence="7">
    <location>
        <begin position="348"/>
        <end position="354"/>
    </location>
</feature>
<feature type="helix" evidence="7">
    <location>
        <begin position="357"/>
        <end position="360"/>
    </location>
</feature>
<feature type="turn" evidence="7">
    <location>
        <begin position="366"/>
        <end position="368"/>
    </location>
</feature>
<feature type="strand" evidence="7">
    <location>
        <begin position="375"/>
        <end position="386"/>
    </location>
</feature>
<feature type="strand" evidence="7">
    <location>
        <begin position="390"/>
        <end position="392"/>
    </location>
</feature>
<feature type="strand" evidence="7">
    <location>
        <begin position="407"/>
        <end position="410"/>
    </location>
</feature>
<feature type="strand" evidence="7">
    <location>
        <begin position="415"/>
        <end position="421"/>
    </location>
</feature>
<feature type="turn" evidence="7">
    <location>
        <begin position="422"/>
        <end position="424"/>
    </location>
</feature>
<feature type="strand" evidence="7">
    <location>
        <begin position="427"/>
        <end position="434"/>
    </location>
</feature>
<proteinExistence type="evidence at protein level"/>
<evidence type="ECO:0000250" key="1"/>
<evidence type="ECO:0000250" key="2">
    <source>
        <dbReference type="UniProtKB" id="P08697"/>
    </source>
</evidence>
<evidence type="ECO:0000255" key="3"/>
<evidence type="ECO:0000256" key="4">
    <source>
        <dbReference type="SAM" id="MobiDB-lite"/>
    </source>
</evidence>
<evidence type="ECO:0000269" key="5">
    <source>
    </source>
</evidence>
<evidence type="ECO:0000305" key="6"/>
<evidence type="ECO:0007829" key="7">
    <source>
        <dbReference type="PDB" id="2R9Y"/>
    </source>
</evidence>